<reference key="1">
    <citation type="journal article" date="2004" name="Proc. Natl. Acad. Sci. U.S.A.">
        <title>Structural flexibility in the Burkholderia mallei genome.</title>
        <authorList>
            <person name="Nierman W.C."/>
            <person name="DeShazer D."/>
            <person name="Kim H.S."/>
            <person name="Tettelin H."/>
            <person name="Nelson K.E."/>
            <person name="Feldblyum T.V."/>
            <person name="Ulrich R.L."/>
            <person name="Ronning C.M."/>
            <person name="Brinkac L.M."/>
            <person name="Daugherty S.C."/>
            <person name="Davidsen T.D."/>
            <person name="DeBoy R.T."/>
            <person name="Dimitrov G."/>
            <person name="Dodson R.J."/>
            <person name="Durkin A.S."/>
            <person name="Gwinn M.L."/>
            <person name="Haft D.H."/>
            <person name="Khouri H.M."/>
            <person name="Kolonay J.F."/>
            <person name="Madupu R."/>
            <person name="Mohammoud Y."/>
            <person name="Nelson W.C."/>
            <person name="Radune D."/>
            <person name="Romero C.M."/>
            <person name="Sarria S."/>
            <person name="Selengut J."/>
            <person name="Shamblin C."/>
            <person name="Sullivan S.A."/>
            <person name="White O."/>
            <person name="Yu Y."/>
            <person name="Zafar N."/>
            <person name="Zhou L."/>
            <person name="Fraser C.M."/>
        </authorList>
    </citation>
    <scope>NUCLEOTIDE SEQUENCE [LARGE SCALE GENOMIC DNA]</scope>
    <source>
        <strain>ATCC 23344</strain>
    </source>
</reference>
<dbReference type="EC" id="4.6.1.12" evidence="1"/>
<dbReference type="EMBL" id="CP000010">
    <property type="protein sequence ID" value="AAU47698.1"/>
    <property type="molecule type" value="Genomic_DNA"/>
</dbReference>
<dbReference type="RefSeq" id="WP_004191369.1">
    <property type="nucleotide sequence ID" value="NC_006348.1"/>
</dbReference>
<dbReference type="RefSeq" id="YP_103133.1">
    <property type="nucleotide sequence ID" value="NC_006348.1"/>
</dbReference>
<dbReference type="SMR" id="Q62JI6"/>
<dbReference type="GeneID" id="93060627"/>
<dbReference type="KEGG" id="bma:BMA1489"/>
<dbReference type="PATRIC" id="fig|243160.12.peg.1532"/>
<dbReference type="eggNOG" id="COG0245">
    <property type="taxonomic scope" value="Bacteria"/>
</dbReference>
<dbReference type="HOGENOM" id="CLU_084630_2_0_4"/>
<dbReference type="UniPathway" id="UPA00056">
    <property type="reaction ID" value="UER00095"/>
</dbReference>
<dbReference type="Proteomes" id="UP000006693">
    <property type="component" value="Chromosome 1"/>
</dbReference>
<dbReference type="GO" id="GO:0008685">
    <property type="term" value="F:2-C-methyl-D-erythritol 2,4-cyclodiphosphate synthase activity"/>
    <property type="evidence" value="ECO:0007669"/>
    <property type="project" value="UniProtKB-UniRule"/>
</dbReference>
<dbReference type="GO" id="GO:0046872">
    <property type="term" value="F:metal ion binding"/>
    <property type="evidence" value="ECO:0007669"/>
    <property type="project" value="UniProtKB-KW"/>
</dbReference>
<dbReference type="GO" id="GO:0019288">
    <property type="term" value="P:isopentenyl diphosphate biosynthetic process, methylerythritol 4-phosphate pathway"/>
    <property type="evidence" value="ECO:0007669"/>
    <property type="project" value="UniProtKB-UniRule"/>
</dbReference>
<dbReference type="GO" id="GO:0016114">
    <property type="term" value="P:terpenoid biosynthetic process"/>
    <property type="evidence" value="ECO:0007669"/>
    <property type="project" value="InterPro"/>
</dbReference>
<dbReference type="CDD" id="cd00554">
    <property type="entry name" value="MECDP_synthase"/>
    <property type="match status" value="1"/>
</dbReference>
<dbReference type="FunFam" id="3.30.1330.50:FF:000001">
    <property type="entry name" value="2-C-methyl-D-erythritol 2,4-cyclodiphosphate synthase"/>
    <property type="match status" value="1"/>
</dbReference>
<dbReference type="Gene3D" id="3.30.1330.50">
    <property type="entry name" value="2-C-methyl-D-erythritol 2,4-cyclodiphosphate synthase"/>
    <property type="match status" value="1"/>
</dbReference>
<dbReference type="HAMAP" id="MF_00107">
    <property type="entry name" value="IspF"/>
    <property type="match status" value="1"/>
</dbReference>
<dbReference type="InterPro" id="IPR003526">
    <property type="entry name" value="MECDP_synthase"/>
</dbReference>
<dbReference type="InterPro" id="IPR020555">
    <property type="entry name" value="MECDP_synthase_CS"/>
</dbReference>
<dbReference type="InterPro" id="IPR036571">
    <property type="entry name" value="MECDP_synthase_sf"/>
</dbReference>
<dbReference type="NCBIfam" id="TIGR00151">
    <property type="entry name" value="ispF"/>
    <property type="match status" value="1"/>
</dbReference>
<dbReference type="PANTHER" id="PTHR43181">
    <property type="entry name" value="2-C-METHYL-D-ERYTHRITOL 2,4-CYCLODIPHOSPHATE SYNTHASE, CHLOROPLASTIC"/>
    <property type="match status" value="1"/>
</dbReference>
<dbReference type="PANTHER" id="PTHR43181:SF1">
    <property type="entry name" value="2-C-METHYL-D-ERYTHRITOL 2,4-CYCLODIPHOSPHATE SYNTHASE, CHLOROPLASTIC"/>
    <property type="match status" value="1"/>
</dbReference>
<dbReference type="Pfam" id="PF02542">
    <property type="entry name" value="YgbB"/>
    <property type="match status" value="1"/>
</dbReference>
<dbReference type="SUPFAM" id="SSF69765">
    <property type="entry name" value="IpsF-like"/>
    <property type="match status" value="1"/>
</dbReference>
<dbReference type="PROSITE" id="PS01350">
    <property type="entry name" value="ISPF"/>
    <property type="match status" value="1"/>
</dbReference>
<keyword id="KW-0414">Isoprene biosynthesis</keyword>
<keyword id="KW-0456">Lyase</keyword>
<keyword id="KW-0479">Metal-binding</keyword>
<keyword id="KW-1185">Reference proteome</keyword>
<evidence type="ECO:0000255" key="1">
    <source>
        <dbReference type="HAMAP-Rule" id="MF_00107"/>
    </source>
</evidence>
<protein>
    <recommendedName>
        <fullName evidence="1">2-C-methyl-D-erythritol 2,4-cyclodiphosphate synthase</fullName>
        <shortName evidence="1">MECDP-synthase</shortName>
        <shortName evidence="1">MECPP-synthase</shortName>
        <shortName evidence="1">MECPS</shortName>
        <ecNumber evidence="1">4.6.1.12</ecNumber>
    </recommendedName>
</protein>
<accession>Q62JI6</accession>
<proteinExistence type="inferred from homology"/>
<feature type="chain" id="PRO_0000189449" description="2-C-methyl-D-erythritol 2,4-cyclodiphosphate synthase">
    <location>
        <begin position="1"/>
        <end position="162"/>
    </location>
</feature>
<feature type="binding site" evidence="1">
    <location>
        <begin position="10"/>
        <end position="12"/>
    </location>
    <ligand>
        <name>4-CDP-2-C-methyl-D-erythritol 2-phosphate</name>
        <dbReference type="ChEBI" id="CHEBI:57919"/>
    </ligand>
</feature>
<feature type="binding site" evidence="1">
    <location>
        <position position="10"/>
    </location>
    <ligand>
        <name>a divalent metal cation</name>
        <dbReference type="ChEBI" id="CHEBI:60240"/>
    </ligand>
</feature>
<feature type="binding site" evidence="1">
    <location>
        <position position="12"/>
    </location>
    <ligand>
        <name>a divalent metal cation</name>
        <dbReference type="ChEBI" id="CHEBI:60240"/>
    </ligand>
</feature>
<feature type="binding site" evidence="1">
    <location>
        <begin position="36"/>
        <end position="37"/>
    </location>
    <ligand>
        <name>4-CDP-2-C-methyl-D-erythritol 2-phosphate</name>
        <dbReference type="ChEBI" id="CHEBI:57919"/>
    </ligand>
</feature>
<feature type="binding site" evidence="1">
    <location>
        <position position="44"/>
    </location>
    <ligand>
        <name>a divalent metal cation</name>
        <dbReference type="ChEBI" id="CHEBI:60240"/>
    </ligand>
</feature>
<feature type="binding site" evidence="1">
    <location>
        <begin position="58"/>
        <end position="60"/>
    </location>
    <ligand>
        <name>4-CDP-2-C-methyl-D-erythritol 2-phosphate</name>
        <dbReference type="ChEBI" id="CHEBI:57919"/>
    </ligand>
</feature>
<feature type="binding site" evidence="1">
    <location>
        <begin position="63"/>
        <end position="67"/>
    </location>
    <ligand>
        <name>4-CDP-2-C-methyl-D-erythritol 2-phosphate</name>
        <dbReference type="ChEBI" id="CHEBI:57919"/>
    </ligand>
</feature>
<feature type="binding site" evidence="1">
    <location>
        <position position="144"/>
    </location>
    <ligand>
        <name>4-CDP-2-C-methyl-D-erythritol 2-phosphate</name>
        <dbReference type="ChEBI" id="CHEBI:57919"/>
    </ligand>
</feature>
<feature type="site" description="Transition state stabilizer" evidence="1">
    <location>
        <position position="36"/>
    </location>
</feature>
<feature type="site" description="Transition state stabilizer" evidence="1">
    <location>
        <position position="135"/>
    </location>
</feature>
<gene>
    <name evidence="1" type="primary">ispF</name>
    <name type="ordered locus">BMA1489</name>
</gene>
<sequence length="162" mass="17175">MDFRIGQGYDVHQLVPGRPLIIGGVTIPYERGLLGHSDADVLLHAITDALFGAAALGDIGRHFSDTDPRFKGADSRALLRECASRVAQAGFAIRNVDSTIIAQAPKLAPHIDAMRANIAADLDLPLDRVNVKAKTNEKLGYLGRGEGIEAQAAALVVREAAA</sequence>
<organism>
    <name type="scientific">Burkholderia mallei (strain ATCC 23344)</name>
    <dbReference type="NCBI Taxonomy" id="243160"/>
    <lineage>
        <taxon>Bacteria</taxon>
        <taxon>Pseudomonadati</taxon>
        <taxon>Pseudomonadota</taxon>
        <taxon>Betaproteobacteria</taxon>
        <taxon>Burkholderiales</taxon>
        <taxon>Burkholderiaceae</taxon>
        <taxon>Burkholderia</taxon>
        <taxon>pseudomallei group</taxon>
    </lineage>
</organism>
<comment type="function">
    <text evidence="1">Involved in the biosynthesis of isopentenyl diphosphate (IPP) and dimethylallyl diphosphate (DMAPP), two major building blocks of isoprenoid compounds. Catalyzes the conversion of 4-diphosphocytidyl-2-C-methyl-D-erythritol 2-phosphate (CDP-ME2P) to 2-C-methyl-D-erythritol 2,4-cyclodiphosphate (ME-CPP) with a corresponding release of cytidine 5-monophosphate (CMP).</text>
</comment>
<comment type="catalytic activity">
    <reaction evidence="1">
        <text>4-CDP-2-C-methyl-D-erythritol 2-phosphate = 2-C-methyl-D-erythritol 2,4-cyclic diphosphate + CMP</text>
        <dbReference type="Rhea" id="RHEA:23864"/>
        <dbReference type="ChEBI" id="CHEBI:57919"/>
        <dbReference type="ChEBI" id="CHEBI:58483"/>
        <dbReference type="ChEBI" id="CHEBI:60377"/>
        <dbReference type="EC" id="4.6.1.12"/>
    </reaction>
</comment>
<comment type="cofactor">
    <cofactor evidence="1">
        <name>a divalent metal cation</name>
        <dbReference type="ChEBI" id="CHEBI:60240"/>
    </cofactor>
    <text evidence="1">Binds 1 divalent metal cation per subunit.</text>
</comment>
<comment type="pathway">
    <text evidence="1">Isoprenoid biosynthesis; isopentenyl diphosphate biosynthesis via DXP pathway; isopentenyl diphosphate from 1-deoxy-D-xylulose 5-phosphate: step 4/6.</text>
</comment>
<comment type="subunit">
    <text evidence="1">Homotrimer.</text>
</comment>
<comment type="similarity">
    <text evidence="1">Belongs to the IspF family.</text>
</comment>
<name>ISPF_BURMA</name>